<dbReference type="EMBL" id="CP000422">
    <property type="protein sequence ID" value="ABJ68457.1"/>
    <property type="molecule type" value="Genomic_DNA"/>
</dbReference>
<dbReference type="RefSeq" id="WP_002832277.1">
    <property type="nucleotide sequence ID" value="NC_008525.1"/>
</dbReference>
<dbReference type="SMR" id="Q03EB5"/>
<dbReference type="STRING" id="278197.PEPE_1419"/>
<dbReference type="GeneID" id="57366426"/>
<dbReference type="KEGG" id="ppe:PEPE_1419"/>
<dbReference type="eggNOG" id="COG0051">
    <property type="taxonomic scope" value="Bacteria"/>
</dbReference>
<dbReference type="HOGENOM" id="CLU_122625_1_3_9"/>
<dbReference type="OrthoDB" id="9804464at2"/>
<dbReference type="Proteomes" id="UP000000773">
    <property type="component" value="Chromosome"/>
</dbReference>
<dbReference type="GO" id="GO:1990904">
    <property type="term" value="C:ribonucleoprotein complex"/>
    <property type="evidence" value="ECO:0007669"/>
    <property type="project" value="UniProtKB-KW"/>
</dbReference>
<dbReference type="GO" id="GO:0005840">
    <property type="term" value="C:ribosome"/>
    <property type="evidence" value="ECO:0007669"/>
    <property type="project" value="UniProtKB-KW"/>
</dbReference>
<dbReference type="GO" id="GO:0003735">
    <property type="term" value="F:structural constituent of ribosome"/>
    <property type="evidence" value="ECO:0007669"/>
    <property type="project" value="InterPro"/>
</dbReference>
<dbReference type="GO" id="GO:0000049">
    <property type="term" value="F:tRNA binding"/>
    <property type="evidence" value="ECO:0007669"/>
    <property type="project" value="UniProtKB-UniRule"/>
</dbReference>
<dbReference type="GO" id="GO:0006412">
    <property type="term" value="P:translation"/>
    <property type="evidence" value="ECO:0007669"/>
    <property type="project" value="UniProtKB-UniRule"/>
</dbReference>
<dbReference type="FunFam" id="3.30.70.600:FF:000001">
    <property type="entry name" value="30S ribosomal protein S10"/>
    <property type="match status" value="1"/>
</dbReference>
<dbReference type="Gene3D" id="3.30.70.600">
    <property type="entry name" value="Ribosomal protein S10 domain"/>
    <property type="match status" value="1"/>
</dbReference>
<dbReference type="HAMAP" id="MF_00508">
    <property type="entry name" value="Ribosomal_uS10"/>
    <property type="match status" value="1"/>
</dbReference>
<dbReference type="InterPro" id="IPR001848">
    <property type="entry name" value="Ribosomal_uS10"/>
</dbReference>
<dbReference type="InterPro" id="IPR018268">
    <property type="entry name" value="Ribosomal_uS10_CS"/>
</dbReference>
<dbReference type="InterPro" id="IPR027486">
    <property type="entry name" value="Ribosomal_uS10_dom"/>
</dbReference>
<dbReference type="InterPro" id="IPR036838">
    <property type="entry name" value="Ribosomal_uS10_dom_sf"/>
</dbReference>
<dbReference type="NCBIfam" id="NF001861">
    <property type="entry name" value="PRK00596.1"/>
    <property type="match status" value="1"/>
</dbReference>
<dbReference type="NCBIfam" id="TIGR01049">
    <property type="entry name" value="rpsJ_bact"/>
    <property type="match status" value="1"/>
</dbReference>
<dbReference type="PANTHER" id="PTHR11700">
    <property type="entry name" value="30S RIBOSOMAL PROTEIN S10 FAMILY MEMBER"/>
    <property type="match status" value="1"/>
</dbReference>
<dbReference type="Pfam" id="PF00338">
    <property type="entry name" value="Ribosomal_S10"/>
    <property type="match status" value="1"/>
</dbReference>
<dbReference type="PRINTS" id="PR00971">
    <property type="entry name" value="RIBOSOMALS10"/>
</dbReference>
<dbReference type="SMART" id="SM01403">
    <property type="entry name" value="Ribosomal_S10"/>
    <property type="match status" value="1"/>
</dbReference>
<dbReference type="SUPFAM" id="SSF54999">
    <property type="entry name" value="Ribosomal protein S10"/>
    <property type="match status" value="1"/>
</dbReference>
<dbReference type="PROSITE" id="PS00361">
    <property type="entry name" value="RIBOSOMAL_S10"/>
    <property type="match status" value="1"/>
</dbReference>
<reference key="1">
    <citation type="journal article" date="2006" name="Proc. Natl. Acad. Sci. U.S.A.">
        <title>Comparative genomics of the lactic acid bacteria.</title>
        <authorList>
            <person name="Makarova K.S."/>
            <person name="Slesarev A."/>
            <person name="Wolf Y.I."/>
            <person name="Sorokin A."/>
            <person name="Mirkin B."/>
            <person name="Koonin E.V."/>
            <person name="Pavlov A."/>
            <person name="Pavlova N."/>
            <person name="Karamychev V."/>
            <person name="Polouchine N."/>
            <person name="Shakhova V."/>
            <person name="Grigoriev I."/>
            <person name="Lou Y."/>
            <person name="Rohksar D."/>
            <person name="Lucas S."/>
            <person name="Huang K."/>
            <person name="Goodstein D.M."/>
            <person name="Hawkins T."/>
            <person name="Plengvidhya V."/>
            <person name="Welker D."/>
            <person name="Hughes J."/>
            <person name="Goh Y."/>
            <person name="Benson A."/>
            <person name="Baldwin K."/>
            <person name="Lee J.-H."/>
            <person name="Diaz-Muniz I."/>
            <person name="Dosti B."/>
            <person name="Smeianov V."/>
            <person name="Wechter W."/>
            <person name="Barabote R."/>
            <person name="Lorca G."/>
            <person name="Altermann E."/>
            <person name="Barrangou R."/>
            <person name="Ganesan B."/>
            <person name="Xie Y."/>
            <person name="Rawsthorne H."/>
            <person name="Tamir D."/>
            <person name="Parker C."/>
            <person name="Breidt F."/>
            <person name="Broadbent J.R."/>
            <person name="Hutkins R."/>
            <person name="O'Sullivan D."/>
            <person name="Steele J."/>
            <person name="Unlu G."/>
            <person name="Saier M.H. Jr."/>
            <person name="Klaenhammer T."/>
            <person name="Richardson P."/>
            <person name="Kozyavkin S."/>
            <person name="Weimer B.C."/>
            <person name="Mills D.A."/>
        </authorList>
    </citation>
    <scope>NUCLEOTIDE SEQUENCE [LARGE SCALE GENOMIC DNA]</scope>
    <source>
        <strain>ATCC 25745 / CCUG 21536 / LMG 10740 / 183-1w</strain>
    </source>
</reference>
<feature type="chain" id="PRO_1000015075" description="Small ribosomal subunit protein uS10">
    <location>
        <begin position="1"/>
        <end position="102"/>
    </location>
</feature>
<accession>Q03EB5</accession>
<organism>
    <name type="scientific">Pediococcus pentosaceus (strain ATCC 25745 / CCUG 21536 / LMG 10740 / 183-1w)</name>
    <dbReference type="NCBI Taxonomy" id="278197"/>
    <lineage>
        <taxon>Bacteria</taxon>
        <taxon>Bacillati</taxon>
        <taxon>Bacillota</taxon>
        <taxon>Bacilli</taxon>
        <taxon>Lactobacillales</taxon>
        <taxon>Lactobacillaceae</taxon>
        <taxon>Pediococcus</taxon>
    </lineage>
</organism>
<protein>
    <recommendedName>
        <fullName evidence="1">Small ribosomal subunit protein uS10</fullName>
    </recommendedName>
    <alternativeName>
        <fullName evidence="2">30S ribosomal protein S10</fullName>
    </alternativeName>
</protein>
<proteinExistence type="inferred from homology"/>
<name>RS10_PEDPA</name>
<evidence type="ECO:0000255" key="1">
    <source>
        <dbReference type="HAMAP-Rule" id="MF_00508"/>
    </source>
</evidence>
<evidence type="ECO:0000305" key="2"/>
<sequence length="102" mass="11650">MAKQKIRIRLKAYEHRILDQSADKIVETAKRTGATISGPIPLPTERTVYTVLSSPHKFKKAREQFEMRTHKRLIDIVNPTPKTVDSLMKLDLPSGVDIEIKL</sequence>
<comment type="function">
    <text evidence="1">Involved in the binding of tRNA to the ribosomes.</text>
</comment>
<comment type="subunit">
    <text evidence="1">Part of the 30S ribosomal subunit.</text>
</comment>
<comment type="similarity">
    <text evidence="1">Belongs to the universal ribosomal protein uS10 family.</text>
</comment>
<gene>
    <name evidence="1" type="primary">rpsJ</name>
    <name type="ordered locus">PEPE_1419</name>
</gene>
<keyword id="KW-0687">Ribonucleoprotein</keyword>
<keyword id="KW-0689">Ribosomal protein</keyword>